<comment type="function">
    <text evidence="1">Activator of LATS1/2 in the Hippo signaling pathway which plays a pivotal role in organ size control and tumor suppression by restricting proliferation and promoting apoptosis. The core of this pathway is composed of a kinase cascade wherein STK3/MST2 and STK4/MST1, in complex with its regulatory protein SAV1, phosphorylates and activates LATS1/2 in complex with its regulatory protein MOB1, which in turn phosphorylates and inactivates YAP1 oncoprotein and WWTR1/TAZ. Phosphorylation of YAP1 by LATS1/2 inhibits its translocation into the nucleus to regulate cellular genes important for cell proliferation, cell death, and cell migration. Stimulates the kinase activity of STK38 and STK38L. Acts cooperatively with STK3/MST2 to activate STK38 (By similarity).</text>
</comment>
<comment type="subunit">
    <text evidence="1">Binds STK38 and STK38L. Interacts with LATS1 and LATS2 (By similarity). Forms a tripartite complex with STK38 and STK3/MST2 (By similarity).</text>
</comment>
<comment type="PTM">
    <text evidence="1">Phosphorylated by STK3/MST2 and STK4/MST1 and this phosphorylation enhances its binding to LATS1.</text>
</comment>
<comment type="similarity">
    <text evidence="3">Belongs to the MOB1/phocein family.</text>
</comment>
<evidence type="ECO:0000250" key="1"/>
<evidence type="ECO:0000250" key="2">
    <source>
        <dbReference type="UniProtKB" id="Q9H8S9"/>
    </source>
</evidence>
<evidence type="ECO:0000305" key="3"/>
<keyword id="KW-0007">Acetylation</keyword>
<keyword id="KW-0479">Metal-binding</keyword>
<keyword id="KW-0597">Phosphoprotein</keyword>
<keyword id="KW-1185">Reference proteome</keyword>
<keyword id="KW-0862">Zinc</keyword>
<reference key="1">
    <citation type="submission" date="2004-11" db="EMBL/GenBank/DDBJ databases">
        <authorList>
            <consortium name="The German cDNA consortium"/>
        </authorList>
    </citation>
    <scope>NUCLEOTIDE SEQUENCE [LARGE SCALE MRNA]</scope>
    <source>
        <tissue>Brain cortex</tissue>
        <tissue>Kidney</tissue>
    </source>
</reference>
<organism>
    <name type="scientific">Pongo abelii</name>
    <name type="common">Sumatran orangutan</name>
    <name type="synonym">Pongo pygmaeus abelii</name>
    <dbReference type="NCBI Taxonomy" id="9601"/>
    <lineage>
        <taxon>Eukaryota</taxon>
        <taxon>Metazoa</taxon>
        <taxon>Chordata</taxon>
        <taxon>Craniata</taxon>
        <taxon>Vertebrata</taxon>
        <taxon>Euteleostomi</taxon>
        <taxon>Mammalia</taxon>
        <taxon>Eutheria</taxon>
        <taxon>Euarchontoglires</taxon>
        <taxon>Primates</taxon>
        <taxon>Haplorrhini</taxon>
        <taxon>Catarrhini</taxon>
        <taxon>Hominidae</taxon>
        <taxon>Pongo</taxon>
    </lineage>
</organism>
<feature type="initiator methionine" description="Removed" evidence="2">
    <location>
        <position position="1"/>
    </location>
</feature>
<feature type="chain" id="PRO_0000247604" description="MOB kinase activator 1A">
    <location>
        <begin position="2"/>
        <end position="216"/>
    </location>
</feature>
<feature type="binding site" evidence="1">
    <location>
        <position position="79"/>
    </location>
    <ligand>
        <name>Zn(2+)</name>
        <dbReference type="ChEBI" id="CHEBI:29105"/>
    </ligand>
</feature>
<feature type="binding site" evidence="1">
    <location>
        <position position="84"/>
    </location>
    <ligand>
        <name>Zn(2+)</name>
        <dbReference type="ChEBI" id="CHEBI:29105"/>
    </ligand>
</feature>
<feature type="binding site" evidence="1">
    <location>
        <position position="161"/>
    </location>
    <ligand>
        <name>Zn(2+)</name>
        <dbReference type="ChEBI" id="CHEBI:29105"/>
    </ligand>
</feature>
<feature type="binding site" evidence="1">
    <location>
        <position position="166"/>
    </location>
    <ligand>
        <name>Zn(2+)</name>
        <dbReference type="ChEBI" id="CHEBI:29105"/>
    </ligand>
</feature>
<feature type="modified residue" description="N-acetylserine" evidence="2">
    <location>
        <position position="2"/>
    </location>
</feature>
<feature type="modified residue" description="Phosphothreonine" evidence="2">
    <location>
        <position position="12"/>
    </location>
</feature>
<feature type="modified residue" description="Phosphothreonine" evidence="2">
    <location>
        <position position="35"/>
    </location>
</feature>
<feature type="modified residue" description="Phosphothreonine; by STK3/MST2" evidence="2">
    <location>
        <position position="74"/>
    </location>
</feature>
<feature type="modified residue" description="Phosphothreonine" evidence="2">
    <location>
        <position position="181"/>
    </location>
</feature>
<proteinExistence type="evidence at transcript level"/>
<dbReference type="EMBL" id="CR859077">
    <property type="protein sequence ID" value="CAH91270.1"/>
    <property type="molecule type" value="mRNA"/>
</dbReference>
<dbReference type="EMBL" id="CR859538">
    <property type="protein sequence ID" value="CAH91704.1"/>
    <property type="molecule type" value="mRNA"/>
</dbReference>
<dbReference type="RefSeq" id="NP_001125752.1">
    <property type="nucleotide sequence ID" value="NM_001132280.1"/>
</dbReference>
<dbReference type="SMR" id="Q5RAE0"/>
<dbReference type="FunCoup" id="Q5RAE0">
    <property type="interactions" value="3598"/>
</dbReference>
<dbReference type="STRING" id="9601.ENSPPYP00000013698"/>
<dbReference type="Ensembl" id="ENSPPYT00000053329.1">
    <property type="protein sequence ID" value="ENSPPYP00000041432.1"/>
    <property type="gene ID" value="ENSPPYG00000012284.3"/>
</dbReference>
<dbReference type="GeneID" id="100172677"/>
<dbReference type="KEGG" id="pon:100172677"/>
<dbReference type="CTD" id="55233"/>
<dbReference type="eggNOG" id="KOG0440">
    <property type="taxonomic scope" value="Eukaryota"/>
</dbReference>
<dbReference type="GeneTree" id="ENSGT01120000271863"/>
<dbReference type="HOGENOM" id="CLU_038321_3_1_1"/>
<dbReference type="InParanoid" id="Q5RAE0"/>
<dbReference type="OrthoDB" id="8170117at2759"/>
<dbReference type="TreeFam" id="TF300789"/>
<dbReference type="Proteomes" id="UP000001595">
    <property type="component" value="Chromosome 2A"/>
</dbReference>
<dbReference type="GO" id="GO:0046872">
    <property type="term" value="F:metal ion binding"/>
    <property type="evidence" value="ECO:0007669"/>
    <property type="project" value="UniProtKB-KW"/>
</dbReference>
<dbReference type="FunFam" id="1.20.140.30:FF:000001">
    <property type="entry name" value="MOB kinase activator 1A"/>
    <property type="match status" value="1"/>
</dbReference>
<dbReference type="Gene3D" id="1.20.140.30">
    <property type="entry name" value="MOB kinase activator"/>
    <property type="match status" value="1"/>
</dbReference>
<dbReference type="InterPro" id="IPR005301">
    <property type="entry name" value="MOB_kinase_act_fam"/>
</dbReference>
<dbReference type="InterPro" id="IPR036703">
    <property type="entry name" value="MOB_kinase_act_sf"/>
</dbReference>
<dbReference type="PANTHER" id="PTHR22599">
    <property type="entry name" value="MPS ONE BINDER KINASE ACTIVATOR-LIKE MOB"/>
    <property type="match status" value="1"/>
</dbReference>
<dbReference type="Pfam" id="PF03637">
    <property type="entry name" value="Mob1_phocein"/>
    <property type="match status" value="1"/>
</dbReference>
<dbReference type="SMART" id="SM01388">
    <property type="entry name" value="Mob1_phocein"/>
    <property type="match status" value="1"/>
</dbReference>
<dbReference type="SUPFAM" id="SSF101152">
    <property type="entry name" value="Mob1/phocein"/>
    <property type="match status" value="1"/>
</dbReference>
<sequence length="216" mass="25080">MSFLFSSRSSKTFKPKKNIPEGSHQYELLKHAEATLGSGNLRQAVMLPEGEDLNEWIAVNTVDFFNQINMLYGTITEFCTEASCPVMSAGPRYEYHWADGTNIKKPIKCSAPKYIDYLMTWVQDQLDDETLFPSKIGVPFPKNFMSVAKTILKRLFRVYAHIYHQHFDSVMQLQEEAHLNTSFKHFIFFVQEFNLIDRRELAPLQELIEKLGSKDR</sequence>
<accession>Q5RAE0</accession>
<name>MOB1A_PONAB</name>
<gene>
    <name type="primary">MOB1A</name>
    <name type="synonym">MOBK1B</name>
    <name type="synonym">MOBKL1B</name>
</gene>
<protein>
    <recommendedName>
        <fullName>MOB kinase activator 1A</fullName>
    </recommendedName>
    <alternativeName>
        <fullName>Mob1 homolog 1B</fullName>
    </alternativeName>
    <alternativeName>
        <fullName>Mps one binder kinase activator-like 1B</fullName>
    </alternativeName>
</protein>